<proteinExistence type="inferred from homology"/>
<accession>B7GYQ9</accession>
<name>RL25_ACIB3</name>
<keyword id="KW-0687">Ribonucleoprotein</keyword>
<keyword id="KW-0689">Ribosomal protein</keyword>
<keyword id="KW-0694">RNA-binding</keyword>
<keyword id="KW-0699">rRNA-binding</keyword>
<organism>
    <name type="scientific">Acinetobacter baumannii (strain AB307-0294)</name>
    <dbReference type="NCBI Taxonomy" id="557600"/>
    <lineage>
        <taxon>Bacteria</taxon>
        <taxon>Pseudomonadati</taxon>
        <taxon>Pseudomonadota</taxon>
        <taxon>Gammaproteobacteria</taxon>
        <taxon>Moraxellales</taxon>
        <taxon>Moraxellaceae</taxon>
        <taxon>Acinetobacter</taxon>
        <taxon>Acinetobacter calcoaceticus/baumannii complex</taxon>
    </lineage>
</organism>
<dbReference type="EMBL" id="CP001172">
    <property type="protein sequence ID" value="ACJ57064.1"/>
    <property type="molecule type" value="Genomic_DNA"/>
</dbReference>
<dbReference type="RefSeq" id="WP_001273422.1">
    <property type="nucleotide sequence ID" value="NZ_CP001172.1"/>
</dbReference>
<dbReference type="SMR" id="B7GYQ9"/>
<dbReference type="HOGENOM" id="CLU_137946_0_0_6"/>
<dbReference type="Proteomes" id="UP000006924">
    <property type="component" value="Chromosome"/>
</dbReference>
<dbReference type="GO" id="GO:0022625">
    <property type="term" value="C:cytosolic large ribosomal subunit"/>
    <property type="evidence" value="ECO:0007669"/>
    <property type="project" value="TreeGrafter"/>
</dbReference>
<dbReference type="GO" id="GO:0008097">
    <property type="term" value="F:5S rRNA binding"/>
    <property type="evidence" value="ECO:0007669"/>
    <property type="project" value="InterPro"/>
</dbReference>
<dbReference type="GO" id="GO:0003735">
    <property type="term" value="F:structural constituent of ribosome"/>
    <property type="evidence" value="ECO:0007669"/>
    <property type="project" value="InterPro"/>
</dbReference>
<dbReference type="GO" id="GO:0006412">
    <property type="term" value="P:translation"/>
    <property type="evidence" value="ECO:0007669"/>
    <property type="project" value="UniProtKB-UniRule"/>
</dbReference>
<dbReference type="CDD" id="cd00495">
    <property type="entry name" value="Ribosomal_L25_TL5_CTC"/>
    <property type="match status" value="1"/>
</dbReference>
<dbReference type="Gene3D" id="2.40.240.10">
    <property type="entry name" value="Ribosomal Protein L25, Chain P"/>
    <property type="match status" value="1"/>
</dbReference>
<dbReference type="HAMAP" id="MF_01336">
    <property type="entry name" value="Ribosomal_bL25"/>
    <property type="match status" value="1"/>
</dbReference>
<dbReference type="InterPro" id="IPR020056">
    <property type="entry name" value="Rbsml_bL25/Gln-tRNA_synth_N"/>
</dbReference>
<dbReference type="InterPro" id="IPR011035">
    <property type="entry name" value="Ribosomal_bL25/Gln-tRNA_synth"/>
</dbReference>
<dbReference type="InterPro" id="IPR020055">
    <property type="entry name" value="Ribosomal_bL25_short"/>
</dbReference>
<dbReference type="InterPro" id="IPR029751">
    <property type="entry name" value="Ribosomal_L25_dom"/>
</dbReference>
<dbReference type="InterPro" id="IPR020930">
    <property type="entry name" value="Ribosomal_uL5_bac-type"/>
</dbReference>
<dbReference type="NCBIfam" id="NF004612">
    <property type="entry name" value="PRK05943.1"/>
    <property type="match status" value="1"/>
</dbReference>
<dbReference type="PANTHER" id="PTHR33284">
    <property type="entry name" value="RIBOSOMAL PROTEIN L25/GLN-TRNA SYNTHETASE, ANTI-CODON-BINDING DOMAIN-CONTAINING PROTEIN"/>
    <property type="match status" value="1"/>
</dbReference>
<dbReference type="PANTHER" id="PTHR33284:SF1">
    <property type="entry name" value="RIBOSOMAL PROTEIN L25_GLN-TRNA SYNTHETASE, ANTI-CODON-BINDING DOMAIN-CONTAINING PROTEIN"/>
    <property type="match status" value="1"/>
</dbReference>
<dbReference type="Pfam" id="PF01386">
    <property type="entry name" value="Ribosomal_L25p"/>
    <property type="match status" value="1"/>
</dbReference>
<dbReference type="SUPFAM" id="SSF50715">
    <property type="entry name" value="Ribosomal protein L25-like"/>
    <property type="match status" value="1"/>
</dbReference>
<sequence length="98" mass="10925">MANFVLNAQARAEDKQGKGASRRLRRESLVPAIIYGGNAEPVAVTLELRELVKALESNVFFEEVVEIKVGDKVENVKIQALQRHPAKNTPMHADFKRA</sequence>
<evidence type="ECO:0000255" key="1">
    <source>
        <dbReference type="HAMAP-Rule" id="MF_01336"/>
    </source>
</evidence>
<evidence type="ECO:0000256" key="2">
    <source>
        <dbReference type="SAM" id="MobiDB-lite"/>
    </source>
</evidence>
<evidence type="ECO:0000305" key="3"/>
<comment type="function">
    <text evidence="1">This is one of the proteins that binds to the 5S RNA in the ribosome where it forms part of the central protuberance.</text>
</comment>
<comment type="subunit">
    <text evidence="1">Part of the 50S ribosomal subunit; part of the 5S rRNA/L5/L18/L25 subcomplex. Contacts the 5S rRNA. Binds to the 5S rRNA independently of L5 and L18.</text>
</comment>
<comment type="similarity">
    <text evidence="1">Belongs to the bacterial ribosomal protein bL25 family.</text>
</comment>
<gene>
    <name evidence="1" type="primary">rplY</name>
    <name type="ordered locus">ABBFA_002784</name>
</gene>
<reference key="1">
    <citation type="journal article" date="2008" name="J. Bacteriol.">
        <title>Comparative genome sequence analysis of multidrug-resistant Acinetobacter baumannii.</title>
        <authorList>
            <person name="Adams M.D."/>
            <person name="Goglin K."/>
            <person name="Molyneaux N."/>
            <person name="Hujer K.M."/>
            <person name="Lavender H."/>
            <person name="Jamison J.J."/>
            <person name="MacDonald I.J."/>
            <person name="Martin K.M."/>
            <person name="Russo T."/>
            <person name="Campagnari A.A."/>
            <person name="Hujer A.M."/>
            <person name="Bonomo R.A."/>
            <person name="Gill S.R."/>
        </authorList>
    </citation>
    <scope>NUCLEOTIDE SEQUENCE [LARGE SCALE GENOMIC DNA]</scope>
    <source>
        <strain>AB307-0294</strain>
    </source>
</reference>
<feature type="chain" id="PRO_1000142570" description="Large ribosomal subunit protein bL25">
    <location>
        <begin position="1"/>
        <end position="98"/>
    </location>
</feature>
<feature type="region of interest" description="Disordered" evidence="2">
    <location>
        <begin position="1"/>
        <end position="23"/>
    </location>
</feature>
<protein>
    <recommendedName>
        <fullName evidence="1">Large ribosomal subunit protein bL25</fullName>
    </recommendedName>
    <alternativeName>
        <fullName evidence="3">50S ribosomal protein L25</fullName>
    </alternativeName>
</protein>